<evidence type="ECO:0000255" key="1"/>
<evidence type="ECO:0000255" key="2">
    <source>
        <dbReference type="PROSITE-ProRule" id="PRU00498"/>
    </source>
</evidence>
<evidence type="ECO:0000303" key="3">
    <source>
    </source>
</evidence>
<evidence type="ECO:0000305" key="4"/>
<evidence type="ECO:0000305" key="5">
    <source>
    </source>
</evidence>
<dbReference type="EMBL" id="AY700570">
    <property type="protein sequence ID" value="AGO65989.1"/>
    <property type="molecule type" value="Genomic_DNA"/>
</dbReference>
<dbReference type="GlyCosmos" id="S0AU91">
    <property type="glycosylation" value="4 sites, No reported glycans"/>
</dbReference>
<dbReference type="GO" id="GO:0005886">
    <property type="term" value="C:plasma membrane"/>
    <property type="evidence" value="ECO:0007669"/>
    <property type="project" value="UniProtKB-SubCell"/>
</dbReference>
<dbReference type="GO" id="GO:0022857">
    <property type="term" value="F:transmembrane transporter activity"/>
    <property type="evidence" value="ECO:0007669"/>
    <property type="project" value="InterPro"/>
</dbReference>
<dbReference type="CDD" id="cd17323">
    <property type="entry name" value="MFS_Tpo1_MDR_like"/>
    <property type="match status" value="1"/>
</dbReference>
<dbReference type="FunFam" id="1.20.1250.20:FF:000011">
    <property type="entry name" value="MFS multidrug transporter, putative"/>
    <property type="match status" value="1"/>
</dbReference>
<dbReference type="Gene3D" id="1.20.1250.20">
    <property type="entry name" value="MFS general substrate transporter like domains"/>
    <property type="match status" value="1"/>
</dbReference>
<dbReference type="InterPro" id="IPR011701">
    <property type="entry name" value="MFS"/>
</dbReference>
<dbReference type="InterPro" id="IPR020846">
    <property type="entry name" value="MFS_dom"/>
</dbReference>
<dbReference type="InterPro" id="IPR036259">
    <property type="entry name" value="MFS_trans_sf"/>
</dbReference>
<dbReference type="PANTHER" id="PTHR23502">
    <property type="entry name" value="MAJOR FACILITATOR SUPERFAMILY"/>
    <property type="match status" value="1"/>
</dbReference>
<dbReference type="PANTHER" id="PTHR23502:SF135">
    <property type="entry name" value="MAJOR FACILITATOR SUPERFAMILY (MFS) PROFILE DOMAIN-CONTAINING PROTEIN-RELATED"/>
    <property type="match status" value="1"/>
</dbReference>
<dbReference type="Pfam" id="PF07690">
    <property type="entry name" value="MFS_1"/>
    <property type="match status" value="1"/>
</dbReference>
<dbReference type="SUPFAM" id="SSF103473">
    <property type="entry name" value="MFS general substrate transporter"/>
    <property type="match status" value="1"/>
</dbReference>
<dbReference type="PROSITE" id="PS50850">
    <property type="entry name" value="MFS"/>
    <property type="match status" value="1"/>
</dbReference>
<reference key="1">
    <citation type="journal article" date="2005" name="Chem. Commun. (Camb.)">
        <title>Equisetin biosynthesis in Fusarium heterosporum.</title>
        <authorList>
            <person name="Sims J.W."/>
            <person name="Fillmore J.P."/>
            <person name="Warner D.D."/>
            <person name="Schmidt E.W."/>
        </authorList>
    </citation>
    <scope>NUCLEOTIDE SEQUENCE [GENOMIC DNA]</scope>
    <source>
        <strain>ATCC 74349 / MF6069</strain>
    </source>
</reference>
<reference key="2">
    <citation type="journal article" date="2013" name="ACS Chem. Biol.">
        <title>Two related pyrrolidinedione synthetase loci in Fusarium heterosporum ATCC 74349 produce divergent metabolites.</title>
        <authorList>
            <person name="Kakule T.B."/>
            <person name="Sardar D."/>
            <person name="Lin Z."/>
            <person name="Schmidt E.W."/>
        </authorList>
    </citation>
    <scope>NUCLEOTIDE SEQUENCE [GENOMIC DNA]</scope>
    <scope>FUNCTION</scope>
    <scope>PATHWAY</scope>
    <source>
        <strain>ATCC 74349 / MF6069</strain>
    </source>
</reference>
<comment type="function">
    <text evidence="5">Efflux pump that might be required for efficient secretion of fusaridione A or other secondary metabolies produced by the fusaridione A gene cluster (PubMed:23614392).</text>
</comment>
<comment type="subcellular location">
    <subcellularLocation>
        <location evidence="4">Cell membrane</location>
        <topology evidence="1">Multi-pass membrane protein</topology>
    </subcellularLocation>
</comment>
<comment type="similarity">
    <text evidence="4">Belongs to the major facilitator superfamily.</text>
</comment>
<accession>S0AU91</accession>
<proteinExistence type="inferred from homology"/>
<sequence length="509" mass="55704">MKGNEFRNQTQTTIKNELAEWSDNSNNSQVDYASNAPSGDHVLVDWDGPNDPKNPKNWPHSAFLIHTILVSMLCLAGNLATTMYAPGAAQLAVEFKTRDTTTIALTVSIYLLGFALAPMVTSPLSEVYGRLIVYHTSNIFFLGFNLACAFSSNIGMFIAFRFLAGCAGSAPMTVGGGTIADFAASPEKNNTALRLFALGPLLGPVIGPIVGGFVAENIGWRWTFRIMSIVIAVLSILSCIFLRETSAAAILGRRGARITKETGKPFMIPGPMPGMPPKPQQPTKEIVSRSLVRPMKMLIFLPQVLILSFYTAFVFGLIYLLFTTFPAVFEGQYGFSPGVSGLSYIGIGFGMVGALFLFNFINMKMSNRTDKHGQLIPESYLPLMTWFSPLLPIGFFWYGWSADKQTHWVVPILGTFFVGFGSFAIIMPTTAYLVYAQGPQGAASVLAASNMMRYVFAAFLPLAGQNMYDQLGLGWGNSLLGFLCVVLAPVPAIFQRYGHYLRERFPTEF</sequence>
<protein>
    <recommendedName>
        <fullName evidence="3">MFS transporter fsdG</fullName>
    </recommendedName>
    <alternativeName>
        <fullName evidence="3">Fusaridione A biosynthesis protein G</fullName>
    </alternativeName>
</protein>
<organism>
    <name type="scientific">Fusarium heterosporum</name>
    <dbReference type="NCBI Taxonomy" id="42747"/>
    <lineage>
        <taxon>Eukaryota</taxon>
        <taxon>Fungi</taxon>
        <taxon>Dikarya</taxon>
        <taxon>Ascomycota</taxon>
        <taxon>Pezizomycotina</taxon>
        <taxon>Sordariomycetes</taxon>
        <taxon>Hypocreomycetidae</taxon>
        <taxon>Hypocreales</taxon>
        <taxon>Nectriaceae</taxon>
        <taxon>Fusarium</taxon>
        <taxon>Fusarium heterosporum species complex</taxon>
    </lineage>
</organism>
<keyword id="KW-1003">Cell membrane</keyword>
<keyword id="KW-0325">Glycoprotein</keyword>
<keyword id="KW-0472">Membrane</keyword>
<keyword id="KW-0812">Transmembrane</keyword>
<keyword id="KW-1133">Transmembrane helix</keyword>
<feature type="chain" id="PRO_0000441311" description="MFS transporter fsdG">
    <location>
        <begin position="1"/>
        <end position="509"/>
    </location>
</feature>
<feature type="transmembrane region" description="Helical" evidence="1">
    <location>
        <begin position="63"/>
        <end position="83"/>
    </location>
</feature>
<feature type="transmembrane region" description="Helical" evidence="1">
    <location>
        <begin position="103"/>
        <end position="123"/>
    </location>
</feature>
<feature type="transmembrane region" description="Helical" evidence="1">
    <location>
        <begin position="139"/>
        <end position="159"/>
    </location>
</feature>
<feature type="transmembrane region" description="Helical" evidence="1">
    <location>
        <begin position="162"/>
        <end position="182"/>
    </location>
</feature>
<feature type="transmembrane region" description="Helical" evidence="1">
    <location>
        <begin position="195"/>
        <end position="215"/>
    </location>
</feature>
<feature type="transmembrane region" description="Helical" evidence="1">
    <location>
        <begin position="222"/>
        <end position="242"/>
    </location>
</feature>
<feature type="transmembrane region" description="Helical" evidence="1">
    <location>
        <begin position="298"/>
        <end position="318"/>
    </location>
</feature>
<feature type="transmembrane region" description="Helical" evidence="1">
    <location>
        <begin position="341"/>
        <end position="361"/>
    </location>
</feature>
<feature type="transmembrane region" description="Helical" evidence="1">
    <location>
        <begin position="380"/>
        <end position="400"/>
    </location>
</feature>
<feature type="transmembrane region" description="Helical" evidence="1">
    <location>
        <begin position="408"/>
        <end position="428"/>
    </location>
</feature>
<feature type="transmembrane region" description="Helical" evidence="1">
    <location>
        <begin position="442"/>
        <end position="462"/>
    </location>
</feature>
<feature type="transmembrane region" description="Helical" evidence="1">
    <location>
        <begin position="474"/>
        <end position="494"/>
    </location>
</feature>
<feature type="glycosylation site" description="N-linked (GlcNAc...) asparagine" evidence="2">
    <location>
        <position position="8"/>
    </location>
</feature>
<feature type="glycosylation site" description="N-linked (GlcNAc...) asparagine" evidence="2">
    <location>
        <position position="26"/>
    </location>
</feature>
<feature type="glycosylation site" description="N-linked (GlcNAc...) asparagine" evidence="2">
    <location>
        <position position="189"/>
    </location>
</feature>
<feature type="glycosylation site" description="N-linked (GlcNAc...) asparagine" evidence="2">
    <location>
        <position position="367"/>
    </location>
</feature>
<name>FSDG_FUSHE</name>
<gene>
    <name evidence="3" type="primary">fsdG</name>
    <name evidence="3" type="synonym">eqi6</name>
</gene>